<sequence>MIVCTTENIAGYRIDKTFGEVFGLTTRSRNLVRTFGAGLKTLVGGEVVTWTQLQDQARLEAIERLKNNADKIGANAVTMMRFDSNEANGIMSVVAYGTAVKVSEL</sequence>
<keyword id="KW-1185">Reference proteome</keyword>
<proteinExistence type="inferred from homology"/>
<feature type="chain" id="PRO_1000013018" description="UPF0145 protein OEOE_0637">
    <location>
        <begin position="1"/>
        <end position="105"/>
    </location>
</feature>
<protein>
    <recommendedName>
        <fullName evidence="1">UPF0145 protein OEOE_0637</fullName>
    </recommendedName>
</protein>
<dbReference type="EMBL" id="CP000411">
    <property type="protein sequence ID" value="ABJ56579.1"/>
    <property type="molecule type" value="Genomic_DNA"/>
</dbReference>
<dbReference type="RefSeq" id="WP_002816510.1">
    <property type="nucleotide sequence ID" value="NC_008528.1"/>
</dbReference>
<dbReference type="SMR" id="Q04G43"/>
<dbReference type="STRING" id="203123.OEOE_0637"/>
<dbReference type="KEGG" id="ooe:OEOE_0637"/>
<dbReference type="eggNOG" id="COG0393">
    <property type="taxonomic scope" value="Bacteria"/>
</dbReference>
<dbReference type="HOGENOM" id="CLU_117144_1_1_9"/>
<dbReference type="Proteomes" id="UP000000774">
    <property type="component" value="Chromosome"/>
</dbReference>
<dbReference type="Gene3D" id="3.30.110.70">
    <property type="entry name" value="Hypothetical protein apc22750. Chain B"/>
    <property type="match status" value="1"/>
</dbReference>
<dbReference type="HAMAP" id="MF_00338">
    <property type="entry name" value="UPF0145"/>
    <property type="match status" value="1"/>
</dbReference>
<dbReference type="InterPro" id="IPR035439">
    <property type="entry name" value="UPF0145_dom_sf"/>
</dbReference>
<dbReference type="InterPro" id="IPR002765">
    <property type="entry name" value="UPF0145_YbjQ-like"/>
</dbReference>
<dbReference type="PANTHER" id="PTHR34068:SF2">
    <property type="entry name" value="UPF0145 PROTEIN SCO3412"/>
    <property type="match status" value="1"/>
</dbReference>
<dbReference type="PANTHER" id="PTHR34068">
    <property type="entry name" value="UPF0145 PROTEIN YBJQ"/>
    <property type="match status" value="1"/>
</dbReference>
<dbReference type="Pfam" id="PF01906">
    <property type="entry name" value="YbjQ_1"/>
    <property type="match status" value="1"/>
</dbReference>
<dbReference type="SUPFAM" id="SSF117782">
    <property type="entry name" value="YbjQ-like"/>
    <property type="match status" value="1"/>
</dbReference>
<reference key="1">
    <citation type="journal article" date="2006" name="Proc. Natl. Acad. Sci. U.S.A.">
        <title>Comparative genomics of the lactic acid bacteria.</title>
        <authorList>
            <person name="Makarova K.S."/>
            <person name="Slesarev A."/>
            <person name="Wolf Y.I."/>
            <person name="Sorokin A."/>
            <person name="Mirkin B."/>
            <person name="Koonin E.V."/>
            <person name="Pavlov A."/>
            <person name="Pavlova N."/>
            <person name="Karamychev V."/>
            <person name="Polouchine N."/>
            <person name="Shakhova V."/>
            <person name="Grigoriev I."/>
            <person name="Lou Y."/>
            <person name="Rohksar D."/>
            <person name="Lucas S."/>
            <person name="Huang K."/>
            <person name="Goodstein D.M."/>
            <person name="Hawkins T."/>
            <person name="Plengvidhya V."/>
            <person name="Welker D."/>
            <person name="Hughes J."/>
            <person name="Goh Y."/>
            <person name="Benson A."/>
            <person name="Baldwin K."/>
            <person name="Lee J.-H."/>
            <person name="Diaz-Muniz I."/>
            <person name="Dosti B."/>
            <person name="Smeianov V."/>
            <person name="Wechter W."/>
            <person name="Barabote R."/>
            <person name="Lorca G."/>
            <person name="Altermann E."/>
            <person name="Barrangou R."/>
            <person name="Ganesan B."/>
            <person name="Xie Y."/>
            <person name="Rawsthorne H."/>
            <person name="Tamir D."/>
            <person name="Parker C."/>
            <person name="Breidt F."/>
            <person name="Broadbent J.R."/>
            <person name="Hutkins R."/>
            <person name="O'Sullivan D."/>
            <person name="Steele J."/>
            <person name="Unlu G."/>
            <person name="Saier M.H. Jr."/>
            <person name="Klaenhammer T."/>
            <person name="Richardson P."/>
            <person name="Kozyavkin S."/>
            <person name="Weimer B.C."/>
            <person name="Mills D.A."/>
        </authorList>
    </citation>
    <scope>NUCLEOTIDE SEQUENCE [LARGE SCALE GENOMIC DNA]</scope>
    <source>
        <strain>ATCC BAA-331 / PSU-1</strain>
    </source>
</reference>
<name>Y637_OENOB</name>
<gene>
    <name type="ordered locus">OEOE_0637</name>
</gene>
<evidence type="ECO:0000255" key="1">
    <source>
        <dbReference type="HAMAP-Rule" id="MF_00338"/>
    </source>
</evidence>
<organism>
    <name type="scientific">Oenococcus oeni (strain ATCC BAA-331 / PSU-1)</name>
    <dbReference type="NCBI Taxonomy" id="203123"/>
    <lineage>
        <taxon>Bacteria</taxon>
        <taxon>Bacillati</taxon>
        <taxon>Bacillota</taxon>
        <taxon>Bacilli</taxon>
        <taxon>Lactobacillales</taxon>
        <taxon>Lactobacillaceae</taxon>
        <taxon>Oenococcus</taxon>
    </lineage>
</organism>
<accession>Q04G43</accession>
<comment type="similarity">
    <text evidence="1">Belongs to the UPF0145 family.</text>
</comment>